<feature type="chain" id="PRO_0000117492" description="NADH-ubiquinone oxidoreductase chain 1">
    <location>
        <begin position="1"/>
        <end position="318"/>
    </location>
</feature>
<feature type="transmembrane region" description="Helical" evidence="2">
    <location>
        <begin position="2"/>
        <end position="22"/>
    </location>
</feature>
<feature type="transmembrane region" description="Helical" evidence="2">
    <location>
        <begin position="68"/>
        <end position="88"/>
    </location>
</feature>
<feature type="transmembrane region" description="Helical" evidence="2">
    <location>
        <begin position="100"/>
        <end position="120"/>
    </location>
</feature>
<feature type="transmembrane region" description="Helical" evidence="2">
    <location>
        <begin position="136"/>
        <end position="156"/>
    </location>
</feature>
<feature type="transmembrane region" description="Helical" evidence="2">
    <location>
        <begin position="172"/>
        <end position="192"/>
    </location>
</feature>
<feature type="transmembrane region" description="Helical" evidence="2">
    <location>
        <begin position="223"/>
        <end position="243"/>
    </location>
</feature>
<feature type="transmembrane region" description="Helical" evidence="2">
    <location>
        <begin position="253"/>
        <end position="273"/>
    </location>
</feature>
<feature type="transmembrane region" description="Helical" evidence="2">
    <location>
        <begin position="294"/>
        <end position="314"/>
    </location>
</feature>
<accession>O78707</accession>
<proteinExistence type="inferred from homology"/>
<comment type="function">
    <text evidence="1">Core subunit of the mitochondrial membrane respiratory chain NADH dehydrogenase (Complex I) that is believed to belong to the minimal assembly required for catalysis. Complex I functions in the transfer of electrons from NADH to the respiratory chain. The immediate electron acceptor for the enzyme is believed to be ubiquinone (By similarity).</text>
</comment>
<comment type="catalytic activity">
    <reaction>
        <text>a ubiquinone + NADH + 5 H(+)(in) = a ubiquinol + NAD(+) + 4 H(+)(out)</text>
        <dbReference type="Rhea" id="RHEA:29091"/>
        <dbReference type="Rhea" id="RHEA-COMP:9565"/>
        <dbReference type="Rhea" id="RHEA-COMP:9566"/>
        <dbReference type="ChEBI" id="CHEBI:15378"/>
        <dbReference type="ChEBI" id="CHEBI:16389"/>
        <dbReference type="ChEBI" id="CHEBI:17976"/>
        <dbReference type="ChEBI" id="CHEBI:57540"/>
        <dbReference type="ChEBI" id="CHEBI:57945"/>
        <dbReference type="EC" id="7.1.1.2"/>
    </reaction>
</comment>
<comment type="subcellular location">
    <subcellularLocation>
        <location evidence="1">Mitochondrion inner membrane</location>
        <topology evidence="1">Multi-pass membrane protein</topology>
    </subcellularLocation>
</comment>
<comment type="similarity">
    <text evidence="3">Belongs to the complex I subunit 1 family.</text>
</comment>
<protein>
    <recommendedName>
        <fullName>NADH-ubiquinone oxidoreductase chain 1</fullName>
        <ecNumber>7.1.1.2</ecNumber>
    </recommendedName>
    <alternativeName>
        <fullName>NADH dehydrogenase subunit 1</fullName>
    </alternativeName>
</protein>
<reference key="1">
    <citation type="journal article" date="1998" name="J. Mol. Evol.">
        <title>Conflict among individual mitochondrial proteins in resolving the phylogeny of eutherian orders.</title>
        <authorList>
            <person name="Cao Y."/>
            <person name="Janke A."/>
            <person name="Waddell P.J."/>
            <person name="Westerman M."/>
            <person name="Takenaka O."/>
            <person name="Murata S."/>
            <person name="Okada N."/>
            <person name="Paeaebo S."/>
            <person name="Hasegawa M."/>
        </authorList>
    </citation>
    <scope>NUCLEOTIDE SEQUENCE [GENOMIC DNA]</scope>
    <source>
        <tissue>Liver</tissue>
    </source>
</reference>
<geneLocation type="mitochondrion"/>
<dbReference type="EC" id="7.1.1.2"/>
<dbReference type="EMBL" id="AB011224">
    <property type="protein sequence ID" value="BAA32116.1"/>
    <property type="molecule type" value="Genomic_DNA"/>
</dbReference>
<dbReference type="SMR" id="O78707"/>
<dbReference type="GO" id="GO:0005743">
    <property type="term" value="C:mitochondrial inner membrane"/>
    <property type="evidence" value="ECO:0007669"/>
    <property type="project" value="UniProtKB-SubCell"/>
</dbReference>
<dbReference type="GO" id="GO:0008137">
    <property type="term" value="F:NADH dehydrogenase (ubiquinone) activity"/>
    <property type="evidence" value="ECO:0007669"/>
    <property type="project" value="UniProtKB-EC"/>
</dbReference>
<dbReference type="GO" id="GO:0009060">
    <property type="term" value="P:aerobic respiration"/>
    <property type="evidence" value="ECO:0007669"/>
    <property type="project" value="TreeGrafter"/>
</dbReference>
<dbReference type="HAMAP" id="MF_01350">
    <property type="entry name" value="NDH1_NuoH"/>
    <property type="match status" value="1"/>
</dbReference>
<dbReference type="InterPro" id="IPR001694">
    <property type="entry name" value="NADH_UbQ_OxRdtase_su1/FPO"/>
</dbReference>
<dbReference type="InterPro" id="IPR018086">
    <property type="entry name" value="NADH_UbQ_OxRdtase_su1_CS"/>
</dbReference>
<dbReference type="PANTHER" id="PTHR11432">
    <property type="entry name" value="NADH DEHYDROGENASE SUBUNIT 1"/>
    <property type="match status" value="1"/>
</dbReference>
<dbReference type="PANTHER" id="PTHR11432:SF3">
    <property type="entry name" value="NADH-UBIQUINONE OXIDOREDUCTASE CHAIN 1"/>
    <property type="match status" value="1"/>
</dbReference>
<dbReference type="Pfam" id="PF00146">
    <property type="entry name" value="NADHdh"/>
    <property type="match status" value="1"/>
</dbReference>
<dbReference type="PROSITE" id="PS00667">
    <property type="entry name" value="COMPLEX1_ND1_1"/>
    <property type="match status" value="1"/>
</dbReference>
<dbReference type="PROSITE" id="PS00668">
    <property type="entry name" value="COMPLEX1_ND1_2"/>
    <property type="match status" value="1"/>
</dbReference>
<gene>
    <name type="primary">MT-ND1</name>
    <name type="synonym">MTND1</name>
    <name type="synonym">NADH1</name>
    <name type="synonym">ND1</name>
</gene>
<organism>
    <name type="scientific">Trichosurus vulpecula</name>
    <name type="common">Brush-tailed possum</name>
    <dbReference type="NCBI Taxonomy" id="9337"/>
    <lineage>
        <taxon>Eukaryota</taxon>
        <taxon>Metazoa</taxon>
        <taxon>Chordata</taxon>
        <taxon>Craniata</taxon>
        <taxon>Vertebrata</taxon>
        <taxon>Euteleostomi</taxon>
        <taxon>Mammalia</taxon>
        <taxon>Metatheria</taxon>
        <taxon>Diprotodontia</taxon>
        <taxon>Phalangeridae</taxon>
        <taxon>Trichosurus</taxon>
    </lineage>
</organism>
<sequence length="318" mass="35883">MFIINLLLYIIPILLAVAFLTLVERKALGYMQFRKGPNIVGPYGLLQPIADAVKLFTKEPLRPLTSSISMFIIAPILALTLAFTIWTPLPMPHSLIDLNLGLLFILALSGLSVYSILWSGWASNTKYALMGALRAVAQTISYEVTLAIILLSIMLINGSFTLKNLIITQENMWLIMTTWPLTMMWYISTLAETNRAPFDLTEGESELVSGFNVEYAAGPFAMFFLAEYANIMAMNAMTTILFLGSSINHNFTHLNTLSFVIKTALLTFMFLWVRASYPRFRYDQLMYLLWKNFLPLTLAFCLWFISIPVALSCIPPQI</sequence>
<name>NU1M_TRIVU</name>
<keyword id="KW-0249">Electron transport</keyword>
<keyword id="KW-0472">Membrane</keyword>
<keyword id="KW-0496">Mitochondrion</keyword>
<keyword id="KW-0999">Mitochondrion inner membrane</keyword>
<keyword id="KW-0520">NAD</keyword>
<keyword id="KW-0679">Respiratory chain</keyword>
<keyword id="KW-1278">Translocase</keyword>
<keyword id="KW-0812">Transmembrane</keyword>
<keyword id="KW-1133">Transmembrane helix</keyword>
<keyword id="KW-0813">Transport</keyword>
<keyword id="KW-0830">Ubiquinone</keyword>
<evidence type="ECO:0000250" key="1"/>
<evidence type="ECO:0000255" key="2"/>
<evidence type="ECO:0000305" key="3"/>